<gene>
    <name type="primary">manA</name>
    <name type="synonym">man1</name>
</gene>
<dbReference type="EC" id="3.2.1.78"/>
<dbReference type="EMBL" id="L35487">
    <property type="protein sequence ID" value="AAA67426.1"/>
    <property type="molecule type" value="mRNA"/>
</dbReference>
<dbReference type="SMR" id="Q00012"/>
<dbReference type="CAZy" id="GH5">
    <property type="family name" value="Glycoside Hydrolase Family 5"/>
</dbReference>
<dbReference type="GlyCosmos" id="Q00012">
    <property type="glycosylation" value="4 sites, No reported glycans"/>
</dbReference>
<dbReference type="VEuPathDB" id="FungiDB:ASPACDRAFT_32506"/>
<dbReference type="BRENDA" id="3.2.1.78">
    <property type="organism ID" value="488"/>
</dbReference>
<dbReference type="GO" id="GO:0005576">
    <property type="term" value="C:extracellular region"/>
    <property type="evidence" value="ECO:0007669"/>
    <property type="project" value="UniProtKB-SubCell"/>
</dbReference>
<dbReference type="GO" id="GO:0016985">
    <property type="term" value="F:mannan endo-1,4-beta-mannosidase activity"/>
    <property type="evidence" value="ECO:0007669"/>
    <property type="project" value="UniProtKB-EC"/>
</dbReference>
<dbReference type="GO" id="GO:0046355">
    <property type="term" value="P:mannan catabolic process"/>
    <property type="evidence" value="ECO:0007669"/>
    <property type="project" value="UniProtKB-ARBA"/>
</dbReference>
<dbReference type="FunFam" id="3.20.20.80:FF:000076">
    <property type="entry name" value="Mannan endo-1,4-beta-mannosidase A"/>
    <property type="match status" value="1"/>
</dbReference>
<dbReference type="Gene3D" id="3.20.20.80">
    <property type="entry name" value="Glycosidases"/>
    <property type="match status" value="1"/>
</dbReference>
<dbReference type="InterPro" id="IPR001547">
    <property type="entry name" value="Glyco_hydro_5"/>
</dbReference>
<dbReference type="InterPro" id="IPR017853">
    <property type="entry name" value="Glycoside_hydrolase_SF"/>
</dbReference>
<dbReference type="InterPro" id="IPR045053">
    <property type="entry name" value="MAN-like"/>
</dbReference>
<dbReference type="PANTHER" id="PTHR31451">
    <property type="match status" value="1"/>
</dbReference>
<dbReference type="PANTHER" id="PTHR31451:SF39">
    <property type="entry name" value="MANNAN ENDO-1,4-BETA-MANNOSIDASE 1"/>
    <property type="match status" value="1"/>
</dbReference>
<dbReference type="Pfam" id="PF00150">
    <property type="entry name" value="Cellulase"/>
    <property type="match status" value="1"/>
</dbReference>
<dbReference type="SUPFAM" id="SSF51445">
    <property type="entry name" value="(Trans)glycosidases"/>
    <property type="match status" value="1"/>
</dbReference>
<accession>Q00012</accession>
<sequence>MKLSHMLLSLASLGVATALPRTPNHNAATTAFPSTSGLHFTIDGKTGYFAGTNSYWIGFLTNNDDVDLVMSQLAASDLKILRVWGFNDVNTKPTDGTVWYQLHANGTSTINTGADGLQRLDYVVTSAEKYGVKLIINFVNEWTDYGGMQAYVTAYGAAAQTDFYTNTAIQAAYKNYIKAVVSRYSSSAAIFAWELANEPRCQGCDTSVLYNWISDTSKYIKSLDSKHLVTIGDEGFGLDVDSDGSYPYTYGEGLNFTKNLGISTIDFGTLHLYPDSWGTSYDWGNGWITAHAAACKAVGKPCLLEEYGVTSNHCAVESPWQQTAGNATGISGDLYWQYGTTFSWGQSPNDGNTFYYNTSDFTCLVTDHVAAINAQSK</sequence>
<organism>
    <name type="scientific">Aspergillus aculeatus</name>
    <dbReference type="NCBI Taxonomy" id="5053"/>
    <lineage>
        <taxon>Eukaryota</taxon>
        <taxon>Fungi</taxon>
        <taxon>Dikarya</taxon>
        <taxon>Ascomycota</taxon>
        <taxon>Pezizomycotina</taxon>
        <taxon>Eurotiomycetes</taxon>
        <taxon>Eurotiomycetidae</taxon>
        <taxon>Eurotiales</taxon>
        <taxon>Aspergillaceae</taxon>
        <taxon>Aspergillus</taxon>
        <taxon>Aspergillus subgen. Circumdati</taxon>
    </lineage>
</organism>
<proteinExistence type="evidence at protein level"/>
<reference key="1">
    <citation type="journal article" date="1994" name="Biochem. Mol. Biol. Int.">
        <title>Expression cloning, purification and characterization of a beta-1,4-mannanase from Aspergillus aculeatus.</title>
        <authorList>
            <person name="Christgau S."/>
            <person name="Kauppinen S."/>
            <person name="Vind J."/>
            <person name="Kofod L.V."/>
            <person name="Dalboge H."/>
        </authorList>
    </citation>
    <scope>NUCLEOTIDE SEQUENCE [MRNA]</scope>
    <scope>FUNCTION</scope>
    <scope>BIOPHYSICOCHEMICAL PROPERTIES</scope>
    <source>
        <strain>KSM 510</strain>
    </source>
</reference>
<keyword id="KW-0119">Carbohydrate metabolism</keyword>
<keyword id="KW-0325">Glycoprotein</keyword>
<keyword id="KW-0326">Glycosidase</keyword>
<keyword id="KW-0378">Hydrolase</keyword>
<keyword id="KW-0964">Secreted</keyword>
<keyword id="KW-0732">Signal</keyword>
<name>MANA_ASPAC</name>
<feature type="signal peptide" evidence="4">
    <location>
        <begin position="1"/>
        <end position="18"/>
    </location>
</feature>
<feature type="chain" id="PRO_5000142576" description="Mannan endo-1,4-beta-mannosidase A">
    <location>
        <begin position="19"/>
        <end position="377"/>
    </location>
</feature>
<feature type="active site" description="Proton donor" evidence="3">
    <location>
        <position position="198"/>
    </location>
</feature>
<feature type="active site" description="Nucleophile" evidence="3">
    <location>
        <position position="306"/>
    </location>
</feature>
<feature type="binding site" evidence="2">
    <location>
        <position position="84"/>
    </location>
    <ligand>
        <name>substrate</name>
    </ligand>
</feature>
<feature type="binding site" evidence="2">
    <location>
        <position position="197"/>
    </location>
    <ligand>
        <name>substrate</name>
    </ligand>
</feature>
<feature type="binding site" evidence="2">
    <location>
        <position position="273"/>
    </location>
    <ligand>
        <name>substrate</name>
    </ligand>
</feature>
<feature type="binding site" evidence="2">
    <location>
        <position position="336"/>
    </location>
    <ligand>
        <name>substrate</name>
    </ligand>
</feature>
<feature type="glycosylation site" description="N-linked (GlcNAc...) asparagine" evidence="4">
    <location>
        <position position="105"/>
    </location>
</feature>
<feature type="glycosylation site" description="N-linked (GlcNAc...) asparagine" evidence="4">
    <location>
        <position position="255"/>
    </location>
</feature>
<feature type="glycosylation site" description="N-linked (GlcNAc...) asparagine" evidence="4">
    <location>
        <position position="326"/>
    </location>
</feature>
<feature type="glycosylation site" description="N-linked (GlcNAc...) asparagine" evidence="4">
    <location>
        <position position="357"/>
    </location>
</feature>
<protein>
    <recommendedName>
        <fullName>Mannan endo-1,4-beta-mannosidase A</fullName>
        <ecNumber>3.2.1.78</ecNumber>
    </recommendedName>
    <alternativeName>
        <fullName>Endo-beta-1,4-mannanase A</fullName>
    </alternativeName>
</protein>
<comment type="function">
    <text evidence="5">Endo-1,4-mannanase, a crucial enzyme for depolymerization of seed galactomannans and wood galactoglucomannans.</text>
</comment>
<comment type="catalytic activity">
    <reaction>
        <text>Random hydrolysis of (1-&gt;4)-beta-D-mannosidic linkages in mannans, galactomannans and glucomannans.</text>
        <dbReference type="EC" id="3.2.1.78"/>
    </reaction>
</comment>
<comment type="biophysicochemical properties">
    <phDependence>
        <text evidence="5">Optimum pH is 5.0.</text>
    </phDependence>
    <temperatureDependence>
        <text evidence="5">Optimum temperature is between 60 and 70 degrees Celsius.</text>
    </temperatureDependence>
</comment>
<comment type="subcellular location">
    <subcellularLocation>
        <location evidence="1">Secreted</location>
    </subcellularLocation>
</comment>
<comment type="similarity">
    <text evidence="6">Belongs to the glycosyl hydrolase 5 (cellulase A) family.</text>
</comment>
<evidence type="ECO:0000250" key="1"/>
<evidence type="ECO:0000250" key="2">
    <source>
        <dbReference type="UniProtKB" id="B4XC07"/>
    </source>
</evidence>
<evidence type="ECO:0000250" key="3">
    <source>
        <dbReference type="UniProtKB" id="Q99036"/>
    </source>
</evidence>
<evidence type="ECO:0000255" key="4"/>
<evidence type="ECO:0000269" key="5">
    <source>
    </source>
</evidence>
<evidence type="ECO:0000305" key="6"/>